<protein>
    <recommendedName>
        <fullName evidence="1">Recombination protein RecR</fullName>
    </recommendedName>
</protein>
<feature type="chain" id="PRO_1000001623" description="Recombination protein RecR">
    <location>
        <begin position="1"/>
        <end position="198"/>
    </location>
</feature>
<feature type="domain" description="Toprim" evidence="1">
    <location>
        <begin position="80"/>
        <end position="175"/>
    </location>
</feature>
<feature type="zinc finger region" description="C4-type" evidence="1">
    <location>
        <begin position="57"/>
        <end position="72"/>
    </location>
</feature>
<comment type="function">
    <text evidence="1">May play a role in DNA repair. It seems to be involved in an RecBC-independent recombinational process of DNA repair. It may act with RecF and RecO.</text>
</comment>
<comment type="similarity">
    <text evidence="1">Belongs to the RecR family.</text>
</comment>
<name>RECR_STAS1</name>
<sequence length="198" mass="22215">MHYPEPISKLIDSFMKLPGIGPKTAQRLAFHVLDMKEDDVVQFAKALVDVKRELTYCSECGHITEQDPCYICQDKQRDRSVICVVEDDKDVIAMEKMREYKGLYHVLHGSISPMDGIGPEDINIPSLINRLKDEEVKELILAMNPNLEGESTAMYISRLVKPIGITVTRLAQGLSVGGDLEYADEVTLSKAIMGRTEM</sequence>
<reference key="1">
    <citation type="journal article" date="2005" name="Proc. Natl. Acad. Sci. U.S.A.">
        <title>Whole genome sequence of Staphylococcus saprophyticus reveals the pathogenesis of uncomplicated urinary tract infection.</title>
        <authorList>
            <person name="Kuroda M."/>
            <person name="Yamashita A."/>
            <person name="Hirakawa H."/>
            <person name="Kumano M."/>
            <person name="Morikawa K."/>
            <person name="Higashide M."/>
            <person name="Maruyama A."/>
            <person name="Inose Y."/>
            <person name="Matoba K."/>
            <person name="Toh H."/>
            <person name="Kuhara S."/>
            <person name="Hattori M."/>
            <person name="Ohta T."/>
        </authorList>
    </citation>
    <scope>NUCLEOTIDE SEQUENCE [LARGE SCALE GENOMIC DNA]</scope>
    <source>
        <strain>ATCC 15305 / DSM 20229 / NCIMB 8711 / NCTC 7292 / S-41</strain>
    </source>
</reference>
<organism>
    <name type="scientific">Staphylococcus saprophyticus subsp. saprophyticus (strain ATCC 15305 / DSM 20229 / NCIMB 8711 / NCTC 7292 / S-41)</name>
    <dbReference type="NCBI Taxonomy" id="342451"/>
    <lineage>
        <taxon>Bacteria</taxon>
        <taxon>Bacillati</taxon>
        <taxon>Bacillota</taxon>
        <taxon>Bacilli</taxon>
        <taxon>Bacillales</taxon>
        <taxon>Staphylococcaceae</taxon>
        <taxon>Staphylococcus</taxon>
    </lineage>
</organism>
<proteinExistence type="inferred from homology"/>
<evidence type="ECO:0000255" key="1">
    <source>
        <dbReference type="HAMAP-Rule" id="MF_00017"/>
    </source>
</evidence>
<accession>Q49UY9</accession>
<dbReference type="EMBL" id="AP008934">
    <property type="protein sequence ID" value="BAE19421.1"/>
    <property type="molecule type" value="Genomic_DNA"/>
</dbReference>
<dbReference type="RefSeq" id="WP_002484223.1">
    <property type="nucleotide sequence ID" value="NZ_MTGA01000035.1"/>
</dbReference>
<dbReference type="SMR" id="Q49UY9"/>
<dbReference type="GeneID" id="66868449"/>
<dbReference type="KEGG" id="ssp:SSP2276"/>
<dbReference type="eggNOG" id="COG0353">
    <property type="taxonomic scope" value="Bacteria"/>
</dbReference>
<dbReference type="HOGENOM" id="CLU_060739_1_0_9"/>
<dbReference type="OrthoDB" id="9802672at2"/>
<dbReference type="Proteomes" id="UP000006371">
    <property type="component" value="Chromosome"/>
</dbReference>
<dbReference type="GO" id="GO:0003677">
    <property type="term" value="F:DNA binding"/>
    <property type="evidence" value="ECO:0007669"/>
    <property type="project" value="UniProtKB-UniRule"/>
</dbReference>
<dbReference type="GO" id="GO:0008270">
    <property type="term" value="F:zinc ion binding"/>
    <property type="evidence" value="ECO:0007669"/>
    <property type="project" value="UniProtKB-KW"/>
</dbReference>
<dbReference type="GO" id="GO:0006310">
    <property type="term" value="P:DNA recombination"/>
    <property type="evidence" value="ECO:0007669"/>
    <property type="project" value="UniProtKB-UniRule"/>
</dbReference>
<dbReference type="GO" id="GO:0006281">
    <property type="term" value="P:DNA repair"/>
    <property type="evidence" value="ECO:0007669"/>
    <property type="project" value="UniProtKB-UniRule"/>
</dbReference>
<dbReference type="CDD" id="cd01025">
    <property type="entry name" value="TOPRIM_recR"/>
    <property type="match status" value="1"/>
</dbReference>
<dbReference type="Gene3D" id="3.30.60.80">
    <property type="match status" value="1"/>
</dbReference>
<dbReference type="Gene3D" id="3.40.1360.10">
    <property type="match status" value="1"/>
</dbReference>
<dbReference type="Gene3D" id="6.10.250.240">
    <property type="match status" value="1"/>
</dbReference>
<dbReference type="Gene3D" id="1.10.8.420">
    <property type="entry name" value="RecR Domain 1"/>
    <property type="match status" value="1"/>
</dbReference>
<dbReference type="HAMAP" id="MF_00017">
    <property type="entry name" value="RecR"/>
    <property type="match status" value="1"/>
</dbReference>
<dbReference type="InterPro" id="IPR000093">
    <property type="entry name" value="DNA_Rcmb_RecR"/>
</dbReference>
<dbReference type="InterPro" id="IPR003583">
    <property type="entry name" value="Hlx-hairpin-Hlx_DNA-bd_motif"/>
</dbReference>
<dbReference type="InterPro" id="IPR023627">
    <property type="entry name" value="Rcmb_RecR"/>
</dbReference>
<dbReference type="InterPro" id="IPR015967">
    <property type="entry name" value="Rcmb_RecR_Znf"/>
</dbReference>
<dbReference type="InterPro" id="IPR006171">
    <property type="entry name" value="TOPRIM_dom"/>
</dbReference>
<dbReference type="InterPro" id="IPR034137">
    <property type="entry name" value="TOPRIM_RecR"/>
</dbReference>
<dbReference type="NCBIfam" id="TIGR00615">
    <property type="entry name" value="recR"/>
    <property type="match status" value="1"/>
</dbReference>
<dbReference type="PANTHER" id="PTHR30446">
    <property type="entry name" value="RECOMBINATION PROTEIN RECR"/>
    <property type="match status" value="1"/>
</dbReference>
<dbReference type="PANTHER" id="PTHR30446:SF0">
    <property type="entry name" value="RECOMBINATION PROTEIN RECR"/>
    <property type="match status" value="1"/>
</dbReference>
<dbReference type="Pfam" id="PF21175">
    <property type="entry name" value="RecR_C"/>
    <property type="match status" value="1"/>
</dbReference>
<dbReference type="Pfam" id="PF21176">
    <property type="entry name" value="RecR_HhH"/>
    <property type="match status" value="1"/>
</dbReference>
<dbReference type="Pfam" id="PF02132">
    <property type="entry name" value="RecR_ZnF"/>
    <property type="match status" value="1"/>
</dbReference>
<dbReference type="Pfam" id="PF13662">
    <property type="entry name" value="Toprim_4"/>
    <property type="match status" value="1"/>
</dbReference>
<dbReference type="SMART" id="SM00278">
    <property type="entry name" value="HhH1"/>
    <property type="match status" value="1"/>
</dbReference>
<dbReference type="SMART" id="SM00493">
    <property type="entry name" value="TOPRIM"/>
    <property type="match status" value="1"/>
</dbReference>
<dbReference type="SUPFAM" id="SSF111304">
    <property type="entry name" value="Recombination protein RecR"/>
    <property type="match status" value="1"/>
</dbReference>
<dbReference type="PROSITE" id="PS01300">
    <property type="entry name" value="RECR"/>
    <property type="match status" value="1"/>
</dbReference>
<dbReference type="PROSITE" id="PS50880">
    <property type="entry name" value="TOPRIM"/>
    <property type="match status" value="1"/>
</dbReference>
<keyword id="KW-0227">DNA damage</keyword>
<keyword id="KW-0233">DNA recombination</keyword>
<keyword id="KW-0234">DNA repair</keyword>
<keyword id="KW-0479">Metal-binding</keyword>
<keyword id="KW-1185">Reference proteome</keyword>
<keyword id="KW-0862">Zinc</keyword>
<keyword id="KW-0863">Zinc-finger</keyword>
<gene>
    <name evidence="1" type="primary">recR</name>
    <name type="ordered locus">SSP2276</name>
</gene>